<name>CP91_CONRE</name>
<reference key="1">
    <citation type="submission" date="2002-08" db="EMBL/GenBank/DDBJ databases">
        <title>A P-superfamily toxin encoded from Conus regius cDNA.</title>
        <authorList>
            <person name="Braga M.C.V."/>
            <person name="Freitas J.C."/>
            <person name="Yamane T."/>
            <person name="Radis-Baptista G."/>
        </authorList>
    </citation>
    <scope>NUCLEOTIDE SEQUENCE [MRNA]</scope>
    <source>
        <tissue>Venom duct</tissue>
    </source>
</reference>
<accession>Q8I6V7</accession>
<keyword id="KW-1015">Disulfide bond</keyword>
<keyword id="KW-0872">Ion channel impairing toxin</keyword>
<keyword id="KW-0528">Neurotoxin</keyword>
<keyword id="KW-0964">Secreted</keyword>
<keyword id="KW-0732">Signal</keyword>
<keyword id="KW-0800">Toxin</keyword>
<protein>
    <recommendedName>
        <fullName evidence="3">Conotoxin Rg9.1</fullName>
    </recommendedName>
</protein>
<dbReference type="EMBL" id="AY144359">
    <property type="protein sequence ID" value="AAN06008.1"/>
    <property type="molecule type" value="mRNA"/>
</dbReference>
<dbReference type="SMR" id="Q8I6V7"/>
<dbReference type="TCDB" id="8.B.22.1.2">
    <property type="family name" value="the p-conotoxin cystine knot (p-cck) family"/>
</dbReference>
<dbReference type="ConoServer" id="1509">
    <property type="toxin name" value="Rg9.1 precursor"/>
</dbReference>
<dbReference type="GO" id="GO:0005576">
    <property type="term" value="C:extracellular region"/>
    <property type="evidence" value="ECO:0007669"/>
    <property type="project" value="UniProtKB-SubCell"/>
</dbReference>
<dbReference type="GO" id="GO:0099106">
    <property type="term" value="F:ion channel regulator activity"/>
    <property type="evidence" value="ECO:0007669"/>
    <property type="project" value="UniProtKB-KW"/>
</dbReference>
<dbReference type="GO" id="GO:0090729">
    <property type="term" value="F:toxin activity"/>
    <property type="evidence" value="ECO:0007669"/>
    <property type="project" value="UniProtKB-KW"/>
</dbReference>
<dbReference type="InterPro" id="IPR010012">
    <property type="entry name" value="Toxin_11"/>
</dbReference>
<dbReference type="Pfam" id="PF07473">
    <property type="entry name" value="Toxin_11"/>
    <property type="match status" value="1"/>
</dbReference>
<evidence type="ECO:0000250" key="1">
    <source>
        <dbReference type="UniProtKB" id="Q9GU57"/>
    </source>
</evidence>
<evidence type="ECO:0000255" key="2"/>
<evidence type="ECO:0000305" key="3"/>
<evidence type="ECO:0000305" key="4">
    <source ref="1"/>
</evidence>
<proteinExistence type="inferred from homology"/>
<feature type="signal peptide" evidence="2">
    <location>
        <begin position="1"/>
        <end position="20"/>
    </location>
</feature>
<feature type="propeptide" id="PRO_0000035009" evidence="4">
    <location>
        <begin position="21"/>
        <end position="60"/>
    </location>
</feature>
<feature type="peptide" id="PRO_0000035010" description="Conotoxin Rg9.1" evidence="4">
    <location>
        <begin position="61"/>
        <end position="90"/>
    </location>
</feature>
<feature type="disulfide bond" evidence="1">
    <location>
        <begin position="58"/>
        <end position="71"/>
    </location>
</feature>
<feature type="disulfide bond" evidence="1">
    <location>
        <begin position="62"/>
        <end position="73"/>
    </location>
</feature>
<feature type="disulfide bond" evidence="1">
    <location>
        <begin position="67"/>
        <end position="80"/>
    </location>
</feature>
<sequence>MHLSLARSAVLILLLLFALGNFVGVQPGQITRDADHGINLRSLRKQMSRSPLVKGAFCGQACSSVKCPKKCFCHPEEKVCYREMRTKERD</sequence>
<organism>
    <name type="scientific">Conus regius</name>
    <name type="common">Crown cone</name>
    <dbReference type="NCBI Taxonomy" id="101314"/>
    <lineage>
        <taxon>Eukaryota</taxon>
        <taxon>Metazoa</taxon>
        <taxon>Spiralia</taxon>
        <taxon>Lophotrochozoa</taxon>
        <taxon>Mollusca</taxon>
        <taxon>Gastropoda</taxon>
        <taxon>Caenogastropoda</taxon>
        <taxon>Neogastropoda</taxon>
        <taxon>Conoidea</taxon>
        <taxon>Conidae</taxon>
        <taxon>Conus</taxon>
        <taxon>Stephanoconus</taxon>
    </lineage>
</organism>
<comment type="function">
    <text evidence="3">Probable neurotoxin that inhibits ion channels.</text>
</comment>
<comment type="subcellular location">
    <subcellularLocation>
        <location evidence="4">Secreted</location>
    </subcellularLocation>
</comment>
<comment type="tissue specificity">
    <text evidence="4">Expressed by the venom duct.</text>
</comment>
<comment type="domain">
    <text evidence="3">The cysteine framework is IX (C-C-C-C-C-C).</text>
</comment>
<comment type="similarity">
    <text evidence="3">Belongs to the conotoxin P superfamily.</text>
</comment>